<reference key="1">
    <citation type="journal article" date="2001" name="Plant Physiol.">
        <title>Molecular interactions between the specialist herbivore Manduca sexta (Lepidoptera, Sphingidae) and its natural host Nicotiana attenuata. IV. Insect-Induced ethylene reduces jasmonate-induced nicotine accumulation by regulating putrescine N-methyltransferase transcripts.</title>
        <authorList>
            <person name="Winz R.A."/>
            <person name="Baldwin I.T."/>
        </authorList>
    </citation>
    <scope>NUCLEOTIDE SEQUENCE [MRNA]</scope>
    <scope>INDUCTION BY JASMONATE; WOUNDING AND MANDUCA SEXTA</scope>
    <source>
        <tissue>Root</tissue>
    </source>
</reference>
<reference key="2">
    <citation type="submission" date="2016-11" db="EMBL/GenBank/DDBJ databases">
        <title>The genome of Nicotiana attenuata.</title>
        <authorList>
            <person name="Xu S."/>
            <person name="Brockmoeller T."/>
            <person name="Gaquerel E."/>
            <person name="Navarro A."/>
            <person name="Kuhl H."/>
            <person name="Gase K."/>
            <person name="Ling Z."/>
            <person name="Zhou W."/>
            <person name="Kreitzer C."/>
            <person name="Stanke M."/>
            <person name="Tang H."/>
            <person name="Lyons E."/>
            <person name="Pandey P."/>
            <person name="Pandey S.P."/>
            <person name="Timmermann B."/>
            <person name="Baldwin I.T."/>
        </authorList>
    </citation>
    <scope>NUCLEOTIDE SEQUENCE [LARGE SCALE GENOMIC DNA]</scope>
    <source>
        <strain>cv. UT</strain>
        <tissue>Leaf</tissue>
    </source>
</reference>
<reference key="3">
    <citation type="journal article" date="2009" name="Phytochemistry">
        <title>Putrescine N-methyltransferase--the start for alkaloids.</title>
        <authorList>
            <person name="Biastoff S."/>
            <person name="Brandt W."/>
            <person name="Draeger B."/>
        </authorList>
    </citation>
    <scope>REVIEW ON PUTRESCINE N-METHYLTRANSFERASE</scope>
</reference>
<reference key="4">
    <citation type="journal article" date="2017" name="Proc. Natl. Acad. Sci. U.S.A.">
        <title>Wild tobacco genomes reveal the evolution of nicotine biosynthesis.</title>
        <authorList>
            <person name="Xu S."/>
            <person name="Brockmoeller T."/>
            <person name="Navarro-Quezada A."/>
            <person name="Kuhl H."/>
            <person name="Gase K."/>
            <person name="Ling Z."/>
            <person name="Zhou W."/>
            <person name="Kreitzer C."/>
            <person name="Stanke M."/>
            <person name="Tang H."/>
            <person name="Lyons E."/>
            <person name="Pandey P."/>
            <person name="Pandey S.P."/>
            <person name="Timmermann B."/>
            <person name="Gaquerel E."/>
            <person name="Baldwin I.T."/>
        </authorList>
    </citation>
    <scope>TISSUE SPECIFICITY</scope>
    <scope>REVIEW ON NICOTINE BIOSYNTHESIS</scope>
</reference>
<name>PMT2_NICAT</name>
<feature type="chain" id="PRO_0000455797" description="Putrescine N-methyltransferase 2">
    <location>
        <begin position="1"/>
        <end position="371"/>
    </location>
</feature>
<feature type="domain" description="PABS" evidence="2">
    <location>
        <begin position="82"/>
        <end position="319"/>
    </location>
</feature>
<feature type="region of interest" description="Disordered" evidence="4">
    <location>
        <begin position="1"/>
        <end position="70"/>
    </location>
</feature>
<feature type="compositionally biased region" description="Polar residues" evidence="4">
    <location>
        <begin position="1"/>
        <end position="14"/>
    </location>
</feature>
<feature type="compositionally biased region" description="Polar residues" evidence="4">
    <location>
        <begin position="23"/>
        <end position="70"/>
    </location>
</feature>
<feature type="active site" description="Proton acceptor" evidence="2 3">
    <location>
        <position position="238"/>
    </location>
</feature>
<feature type="binding site" evidence="3">
    <location>
        <position position="113"/>
    </location>
    <ligand>
        <name>S-adenosyl-L-methionine</name>
        <dbReference type="ChEBI" id="CHEBI:59789"/>
    </ligand>
</feature>
<feature type="binding site" evidence="3">
    <location>
        <position position="188"/>
    </location>
    <ligand>
        <name>S-adenosyl-L-methionine</name>
        <dbReference type="ChEBI" id="CHEBI:59789"/>
    </ligand>
</feature>
<feature type="binding site" evidence="3">
    <location>
        <begin position="219"/>
        <end position="220"/>
    </location>
    <ligand>
        <name>S-adenosyl-L-methionine</name>
        <dbReference type="ChEBI" id="CHEBI:59789"/>
    </ligand>
</feature>
<feature type="binding site" evidence="3">
    <location>
        <position position="307"/>
    </location>
    <ligand>
        <name>S-adenosyl-L-methionine</name>
        <dbReference type="ChEBI" id="CHEBI:59789"/>
    </ligand>
</feature>
<proteinExistence type="evidence at transcript level"/>
<protein>
    <recommendedName>
        <fullName evidence="7">Putrescine N-methyltransferase 2</fullName>
        <shortName evidence="7">NaPMT2</shortName>
        <ecNumber evidence="3">2.1.1.53</ecNumber>
    </recommendedName>
</protein>
<accession>Q93XQ4</accession>
<accession>A0A314LHN6</accession>
<keyword id="KW-0017">Alkaloid metabolism</keyword>
<keyword id="KW-0489">Methyltransferase</keyword>
<keyword id="KW-0620">Polyamine biosynthesis</keyword>
<keyword id="KW-1185">Reference proteome</keyword>
<keyword id="KW-0949">S-adenosyl-L-methionine</keyword>
<keyword id="KW-0808">Transferase</keyword>
<sequence>MEVISTNTNGSTIFKNGAIPMNGHQNGTSKHQNGTSEHPNGHQNGTSEHQNGHQNGTSEQQNGTISHDNGNKLVGNSNCIKPGWFSEFSALWPGEAFSLKVEKLLFQGKSDYQDVMLFESATYGKVLTLDGAIQHTENGGFPYTEMIVHLPLGSIPNPKKVLIIGGGIGFTLFEMLRYPSIEKIDIVEIDDVVVDVSRKFFPYLAANFNDPRVTLVLGDGAAFVKAAQAEYYDAIIVDSSDPIGPAKDLFERPFFEAVAKALRPGGVVCTQAESIWLHMHIIKQIIANCRQVFKGSVNYAWTTVPTYPTGVIGYMLCSTEGPEVDFKNPVNPIDKETTQVKPKLAPLKFYNSDIHKAAFILPSFARSMIES</sequence>
<evidence type="ECO:0000250" key="1">
    <source>
        <dbReference type="UniProtKB" id="Q42963"/>
    </source>
</evidence>
<evidence type="ECO:0000255" key="2">
    <source>
        <dbReference type="PROSITE-ProRule" id="PRU00354"/>
    </source>
</evidence>
<evidence type="ECO:0000255" key="3">
    <source>
        <dbReference type="PROSITE-ProRule" id="PRU00947"/>
    </source>
</evidence>
<evidence type="ECO:0000256" key="4">
    <source>
        <dbReference type="SAM" id="MobiDB-lite"/>
    </source>
</evidence>
<evidence type="ECO:0000269" key="5">
    <source>
    </source>
</evidence>
<evidence type="ECO:0000269" key="6">
    <source>
    </source>
</evidence>
<evidence type="ECO:0000303" key="7">
    <source>
    </source>
</evidence>
<evidence type="ECO:0000305" key="8"/>
<evidence type="ECO:0000312" key="9">
    <source>
        <dbReference type="EMBL" id="OIT40667.1"/>
    </source>
</evidence>
<dbReference type="EC" id="2.1.1.53" evidence="3"/>
<dbReference type="EMBL" id="AF280403">
    <property type="protein sequence ID" value="AAK49871.1"/>
    <property type="molecule type" value="mRNA"/>
</dbReference>
<dbReference type="EMBL" id="MJEQ01000009">
    <property type="protein sequence ID" value="OIT40667.1"/>
    <property type="status" value="ALT_SEQ"/>
    <property type="molecule type" value="Genomic_DNA"/>
</dbReference>
<dbReference type="RefSeq" id="XP_019258257.1">
    <property type="nucleotide sequence ID" value="XM_019402712.1"/>
</dbReference>
<dbReference type="SMR" id="Q93XQ4"/>
<dbReference type="STRING" id="49451.A0A314LHN6"/>
<dbReference type="GeneID" id="109236517"/>
<dbReference type="KEGG" id="nau:109236517"/>
<dbReference type="OrthoDB" id="38125at2759"/>
<dbReference type="BRENDA" id="2.1.1.53">
    <property type="organism ID" value="9729"/>
</dbReference>
<dbReference type="UniPathway" id="UPA00107"/>
<dbReference type="Proteomes" id="UP000187609">
    <property type="component" value="Unassembled WGS sequence"/>
</dbReference>
<dbReference type="GO" id="GO:0005829">
    <property type="term" value="C:cytosol"/>
    <property type="evidence" value="ECO:0007669"/>
    <property type="project" value="TreeGrafter"/>
</dbReference>
<dbReference type="GO" id="GO:0030750">
    <property type="term" value="F:putrescine N-methyltransferase activity"/>
    <property type="evidence" value="ECO:0007669"/>
    <property type="project" value="UniProtKB-EC"/>
</dbReference>
<dbReference type="GO" id="GO:0004766">
    <property type="term" value="F:spermidine synthase activity"/>
    <property type="evidence" value="ECO:0007669"/>
    <property type="project" value="TreeGrafter"/>
</dbReference>
<dbReference type="GO" id="GO:0009820">
    <property type="term" value="P:alkaloid metabolic process"/>
    <property type="evidence" value="ECO:0007669"/>
    <property type="project" value="UniProtKB-KW"/>
</dbReference>
<dbReference type="GO" id="GO:0032259">
    <property type="term" value="P:methylation"/>
    <property type="evidence" value="ECO:0007669"/>
    <property type="project" value="UniProtKB-KW"/>
</dbReference>
<dbReference type="GO" id="GO:0042179">
    <property type="term" value="P:nicotine biosynthetic process"/>
    <property type="evidence" value="ECO:0007669"/>
    <property type="project" value="UniProtKB-UniPathway"/>
</dbReference>
<dbReference type="GO" id="GO:0009625">
    <property type="term" value="P:response to insect"/>
    <property type="evidence" value="ECO:0000270"/>
    <property type="project" value="UniProtKB"/>
</dbReference>
<dbReference type="GO" id="GO:0009753">
    <property type="term" value="P:response to jasmonic acid"/>
    <property type="evidence" value="ECO:0000270"/>
    <property type="project" value="UniProtKB"/>
</dbReference>
<dbReference type="GO" id="GO:0009611">
    <property type="term" value="P:response to wounding"/>
    <property type="evidence" value="ECO:0000270"/>
    <property type="project" value="UniProtKB"/>
</dbReference>
<dbReference type="GO" id="GO:0008295">
    <property type="term" value="P:spermidine biosynthetic process"/>
    <property type="evidence" value="ECO:0007669"/>
    <property type="project" value="TreeGrafter"/>
</dbReference>
<dbReference type="CDD" id="cd02440">
    <property type="entry name" value="AdoMet_MTases"/>
    <property type="match status" value="1"/>
</dbReference>
<dbReference type="FunFam" id="2.30.140.10:FF:000001">
    <property type="entry name" value="SPE3p Spermidine synthase"/>
    <property type="match status" value="1"/>
</dbReference>
<dbReference type="FunFam" id="3.40.50.150:FF:000013">
    <property type="entry name" value="Spermidine synthase"/>
    <property type="match status" value="1"/>
</dbReference>
<dbReference type="Gene3D" id="2.30.140.10">
    <property type="entry name" value="Spermidine synthase, tetramerisation domain"/>
    <property type="match status" value="1"/>
</dbReference>
<dbReference type="Gene3D" id="3.40.50.150">
    <property type="entry name" value="Vaccinia Virus protein VP39"/>
    <property type="match status" value="1"/>
</dbReference>
<dbReference type="HAMAP" id="MF_00198">
    <property type="entry name" value="Spermidine_synth"/>
    <property type="match status" value="1"/>
</dbReference>
<dbReference type="InterPro" id="IPR030374">
    <property type="entry name" value="PABS"/>
</dbReference>
<dbReference type="InterPro" id="IPR030373">
    <property type="entry name" value="PABS_CS"/>
</dbReference>
<dbReference type="InterPro" id="IPR025803">
    <property type="entry name" value="Putrescine_N-MeTfrase"/>
</dbReference>
<dbReference type="InterPro" id="IPR029063">
    <property type="entry name" value="SAM-dependent_MTases_sf"/>
</dbReference>
<dbReference type="InterPro" id="IPR001045">
    <property type="entry name" value="Spermi_synthase"/>
</dbReference>
<dbReference type="InterPro" id="IPR035246">
    <property type="entry name" value="Spermidine_synt_N"/>
</dbReference>
<dbReference type="InterPro" id="IPR037163">
    <property type="entry name" value="Spermidine_synt_N_sf"/>
</dbReference>
<dbReference type="NCBIfam" id="NF002010">
    <property type="entry name" value="PRK00811.1"/>
    <property type="match status" value="1"/>
</dbReference>
<dbReference type="NCBIfam" id="TIGR00417">
    <property type="entry name" value="speE"/>
    <property type="match status" value="1"/>
</dbReference>
<dbReference type="PANTHER" id="PTHR11558:SF53">
    <property type="entry name" value="PUTRESCINE N-METHYLTRANSFERASE 1"/>
    <property type="match status" value="1"/>
</dbReference>
<dbReference type="PANTHER" id="PTHR11558">
    <property type="entry name" value="SPERMIDINE/SPERMINE SYNTHASE"/>
    <property type="match status" value="1"/>
</dbReference>
<dbReference type="Pfam" id="PF17284">
    <property type="entry name" value="Spermine_synt_N"/>
    <property type="match status" value="1"/>
</dbReference>
<dbReference type="Pfam" id="PF01564">
    <property type="entry name" value="Spermine_synth"/>
    <property type="match status" value="1"/>
</dbReference>
<dbReference type="SUPFAM" id="SSF53335">
    <property type="entry name" value="S-adenosyl-L-methionine-dependent methyltransferases"/>
    <property type="match status" value="1"/>
</dbReference>
<dbReference type="PROSITE" id="PS01330">
    <property type="entry name" value="PABS_1"/>
    <property type="match status" value="1"/>
</dbReference>
<dbReference type="PROSITE" id="PS51006">
    <property type="entry name" value="PABS_2"/>
    <property type="match status" value="1"/>
</dbReference>
<dbReference type="PROSITE" id="PS51615">
    <property type="entry name" value="SAM_MT_PUTRESCINE"/>
    <property type="match status" value="1"/>
</dbReference>
<comment type="function">
    <text evidence="1">Involved in the biosynthesis of pyridine alkaloid natural products, leading mainly to the production of anabasine, anatabine, nicotine and nornicotine, effective deterrents against herbivores with antiparasitic and pesticide properties (neurotoxins); nornicotine serves as the precursor in the synthesis of the carcinogen compound N'-nitrosonornicotine (NNN) (By similarity). Methyltransferase that mediates the conversion of putrescine to N-methylputrescine (By similarity).</text>
</comment>
<comment type="catalytic activity">
    <reaction evidence="3">
        <text>putrescine + S-adenosyl-L-methionine = N-methylputrescine + S-adenosyl-L-homocysteine + H(+)</text>
        <dbReference type="Rhea" id="RHEA:15037"/>
        <dbReference type="ChEBI" id="CHEBI:15378"/>
        <dbReference type="ChEBI" id="CHEBI:57856"/>
        <dbReference type="ChEBI" id="CHEBI:58039"/>
        <dbReference type="ChEBI" id="CHEBI:59789"/>
        <dbReference type="ChEBI" id="CHEBI:326268"/>
        <dbReference type="EC" id="2.1.1.53"/>
    </reaction>
</comment>
<comment type="pathway">
    <text evidence="1">Alkaloid biosynthesis; nicotine biosynthesis.</text>
</comment>
<comment type="tissue specificity">
    <text evidence="6">Mainly expressed in roots.</text>
</comment>
<comment type="induction">
    <text evidence="5">Triggered by jasmonic acid (MeJA); this induction is repressed by 2-chloroethylphosphonic acid (ethephon), an ethylene precursor, that can by alleviated by 1-methylcyclopropene (1-MCP), a competitive inhibitor of ethylene receptors (PubMed:11299398). Accumulates upon wounding and feeding by the specialist herbivore Manduca sexta; these induction is dramatically amplified by a pretreatment with 1-MCP (PubMed:11299398).</text>
</comment>
<comment type="similarity">
    <text evidence="3">Belongs to the class I-like SAM-binding methyltransferase superfamily. Spermidine/spermine synthase family.</text>
</comment>
<comment type="sequence caution" evidence="8">
    <conflict type="erroneous gene model prediction">
        <sequence resource="EMBL-CDS" id="OIT40667"/>
    </conflict>
</comment>
<organism>
    <name type="scientific">Nicotiana attenuata</name>
    <name type="common">Coyote tobacco</name>
    <dbReference type="NCBI Taxonomy" id="49451"/>
    <lineage>
        <taxon>Eukaryota</taxon>
        <taxon>Viridiplantae</taxon>
        <taxon>Streptophyta</taxon>
        <taxon>Embryophyta</taxon>
        <taxon>Tracheophyta</taxon>
        <taxon>Spermatophyta</taxon>
        <taxon>Magnoliopsida</taxon>
        <taxon>eudicotyledons</taxon>
        <taxon>Gunneridae</taxon>
        <taxon>Pentapetalae</taxon>
        <taxon>asterids</taxon>
        <taxon>lamiids</taxon>
        <taxon>Solanales</taxon>
        <taxon>Solanaceae</taxon>
        <taxon>Nicotianoideae</taxon>
        <taxon>Nicotianeae</taxon>
        <taxon>Nicotiana</taxon>
    </lineage>
</organism>
<gene>
    <name evidence="7" type="primary">PMT2</name>
    <name evidence="9" type="ORF">A4A49_05615</name>
</gene>